<evidence type="ECO:0000255" key="1">
    <source>
        <dbReference type="HAMAP-Rule" id="MF_00110"/>
    </source>
</evidence>
<reference key="1">
    <citation type="submission" date="2006-12" db="EMBL/GenBank/DDBJ databases">
        <authorList>
            <person name="Fouts D.E."/>
            <person name="Nelson K.E."/>
            <person name="Sebastian Y."/>
        </authorList>
    </citation>
    <scope>NUCLEOTIDE SEQUENCE [LARGE SCALE GENOMIC DNA]</scope>
    <source>
        <strain>81-176</strain>
    </source>
</reference>
<comment type="function">
    <text evidence="1">Catalyzes the conversion of 3-deoxy-D-arabino-heptulosonate 7-phosphate (DAHP) to dehydroquinate (DHQ).</text>
</comment>
<comment type="catalytic activity">
    <reaction evidence="1">
        <text>7-phospho-2-dehydro-3-deoxy-D-arabino-heptonate = 3-dehydroquinate + phosphate</text>
        <dbReference type="Rhea" id="RHEA:21968"/>
        <dbReference type="ChEBI" id="CHEBI:32364"/>
        <dbReference type="ChEBI" id="CHEBI:43474"/>
        <dbReference type="ChEBI" id="CHEBI:58394"/>
        <dbReference type="EC" id="4.2.3.4"/>
    </reaction>
</comment>
<comment type="cofactor">
    <cofactor evidence="1">
        <name>Co(2+)</name>
        <dbReference type="ChEBI" id="CHEBI:48828"/>
    </cofactor>
    <cofactor evidence="1">
        <name>Zn(2+)</name>
        <dbReference type="ChEBI" id="CHEBI:29105"/>
    </cofactor>
    <text evidence="1">Binds 1 divalent metal cation per subunit. Can use either Co(2+) or Zn(2+).</text>
</comment>
<comment type="cofactor">
    <cofactor evidence="1">
        <name>NAD(+)</name>
        <dbReference type="ChEBI" id="CHEBI:57540"/>
    </cofactor>
</comment>
<comment type="pathway">
    <text evidence="1">Metabolic intermediate biosynthesis; chorismate biosynthesis; chorismate from D-erythrose 4-phosphate and phosphoenolpyruvate: step 2/7.</text>
</comment>
<comment type="subcellular location">
    <subcellularLocation>
        <location evidence="1">Cytoplasm</location>
    </subcellularLocation>
</comment>
<comment type="similarity">
    <text evidence="1">Belongs to the sugar phosphate cyclases superfamily. Dehydroquinate synthase family.</text>
</comment>
<proteinExistence type="inferred from homology"/>
<feature type="chain" id="PRO_1000094483" description="3-dehydroquinate synthase">
    <location>
        <begin position="1"/>
        <end position="351"/>
    </location>
</feature>
<feature type="binding site" evidence="1">
    <location>
        <begin position="60"/>
        <end position="65"/>
    </location>
    <ligand>
        <name>NAD(+)</name>
        <dbReference type="ChEBI" id="CHEBI:57540"/>
    </ligand>
</feature>
<feature type="binding site" evidence="1">
    <location>
        <begin position="94"/>
        <end position="98"/>
    </location>
    <ligand>
        <name>NAD(+)</name>
        <dbReference type="ChEBI" id="CHEBI:57540"/>
    </ligand>
</feature>
<feature type="binding site" evidence="1">
    <location>
        <begin position="118"/>
        <end position="119"/>
    </location>
    <ligand>
        <name>NAD(+)</name>
        <dbReference type="ChEBI" id="CHEBI:57540"/>
    </ligand>
</feature>
<feature type="binding site" evidence="1">
    <location>
        <position position="131"/>
    </location>
    <ligand>
        <name>NAD(+)</name>
        <dbReference type="ChEBI" id="CHEBI:57540"/>
    </ligand>
</feature>
<feature type="binding site" evidence="1">
    <location>
        <position position="140"/>
    </location>
    <ligand>
        <name>NAD(+)</name>
        <dbReference type="ChEBI" id="CHEBI:57540"/>
    </ligand>
</feature>
<feature type="binding site" evidence="1">
    <location>
        <begin position="158"/>
        <end position="161"/>
    </location>
    <ligand>
        <name>NAD(+)</name>
        <dbReference type="ChEBI" id="CHEBI:57540"/>
    </ligand>
</feature>
<feature type="binding site" evidence="1">
    <location>
        <position position="173"/>
    </location>
    <ligand>
        <name>Zn(2+)</name>
        <dbReference type="ChEBI" id="CHEBI:29105"/>
    </ligand>
</feature>
<feature type="binding site" evidence="1">
    <location>
        <position position="239"/>
    </location>
    <ligand>
        <name>Zn(2+)</name>
        <dbReference type="ChEBI" id="CHEBI:29105"/>
    </ligand>
</feature>
<feature type="binding site" evidence="1">
    <location>
        <position position="256"/>
    </location>
    <ligand>
        <name>Zn(2+)</name>
        <dbReference type="ChEBI" id="CHEBI:29105"/>
    </ligand>
</feature>
<protein>
    <recommendedName>
        <fullName evidence="1">3-dehydroquinate synthase</fullName>
        <shortName evidence="1">DHQS</shortName>
        <ecNumber evidence="1">4.2.3.4</ecNumber>
    </recommendedName>
</protein>
<sequence>MQVEVKLKENAYKVYIDELEELEFDSKVFILSNPKISGLHLKTLLSKIKAKEIFIATVKDGEEYKNLSTMEEILNQMFNSKLDRKSVLISFGGGVISDMGGFAASIYQRGIDFINIPTTLLACVDAAVGGKTGVNNNFGKNLIGTFYQPKAVYCESSFLKTLSFRELAAGMAEFIKMAAMFDDSILDFIEKIDEKSFLNATCENEIFTQIIARSIELKSRVVEQDEKESGLRMLLNYGHTFAHVIENFTDYKLYLHGEAVAIGMVMANQLALNLGLLDKMQSQKIKDILLKFGLPISYKINNVDEFYEAFFMDKKSSNKKINFVLASPLGKGFIKGDISKEDIIATLREFQ</sequence>
<name>AROB_CAMJJ</name>
<organism>
    <name type="scientific">Campylobacter jejuni subsp. jejuni serotype O:23/36 (strain 81-176)</name>
    <dbReference type="NCBI Taxonomy" id="354242"/>
    <lineage>
        <taxon>Bacteria</taxon>
        <taxon>Pseudomonadati</taxon>
        <taxon>Campylobacterota</taxon>
        <taxon>Epsilonproteobacteria</taxon>
        <taxon>Campylobacterales</taxon>
        <taxon>Campylobacteraceae</taxon>
        <taxon>Campylobacter</taxon>
    </lineage>
</organism>
<accession>A1VZZ6</accession>
<gene>
    <name evidence="1" type="primary">aroB</name>
    <name type="ordered locus">CJJ81176_1026</name>
</gene>
<keyword id="KW-0028">Amino-acid biosynthesis</keyword>
<keyword id="KW-0057">Aromatic amino acid biosynthesis</keyword>
<keyword id="KW-0170">Cobalt</keyword>
<keyword id="KW-0963">Cytoplasm</keyword>
<keyword id="KW-0456">Lyase</keyword>
<keyword id="KW-0479">Metal-binding</keyword>
<keyword id="KW-0520">NAD</keyword>
<keyword id="KW-0547">Nucleotide-binding</keyword>
<keyword id="KW-0862">Zinc</keyword>
<dbReference type="EC" id="4.2.3.4" evidence="1"/>
<dbReference type="EMBL" id="CP000538">
    <property type="protein sequence ID" value="EAQ72116.1"/>
    <property type="molecule type" value="Genomic_DNA"/>
</dbReference>
<dbReference type="RefSeq" id="WP_002855849.1">
    <property type="nucleotide sequence ID" value="NC_008787.1"/>
</dbReference>
<dbReference type="SMR" id="A1VZZ6"/>
<dbReference type="KEGG" id="cjj:CJJ81176_1026"/>
<dbReference type="eggNOG" id="COG0337">
    <property type="taxonomic scope" value="Bacteria"/>
</dbReference>
<dbReference type="HOGENOM" id="CLU_001201_0_1_7"/>
<dbReference type="UniPathway" id="UPA00053">
    <property type="reaction ID" value="UER00085"/>
</dbReference>
<dbReference type="Proteomes" id="UP000000646">
    <property type="component" value="Chromosome"/>
</dbReference>
<dbReference type="GO" id="GO:0005737">
    <property type="term" value="C:cytoplasm"/>
    <property type="evidence" value="ECO:0007669"/>
    <property type="project" value="UniProtKB-SubCell"/>
</dbReference>
<dbReference type="GO" id="GO:0003856">
    <property type="term" value="F:3-dehydroquinate synthase activity"/>
    <property type="evidence" value="ECO:0007669"/>
    <property type="project" value="UniProtKB-UniRule"/>
</dbReference>
<dbReference type="GO" id="GO:0046872">
    <property type="term" value="F:metal ion binding"/>
    <property type="evidence" value="ECO:0007669"/>
    <property type="project" value="UniProtKB-KW"/>
</dbReference>
<dbReference type="GO" id="GO:0000166">
    <property type="term" value="F:nucleotide binding"/>
    <property type="evidence" value="ECO:0007669"/>
    <property type="project" value="UniProtKB-KW"/>
</dbReference>
<dbReference type="GO" id="GO:0008652">
    <property type="term" value="P:amino acid biosynthetic process"/>
    <property type="evidence" value="ECO:0007669"/>
    <property type="project" value="UniProtKB-KW"/>
</dbReference>
<dbReference type="GO" id="GO:0009073">
    <property type="term" value="P:aromatic amino acid family biosynthetic process"/>
    <property type="evidence" value="ECO:0007669"/>
    <property type="project" value="UniProtKB-KW"/>
</dbReference>
<dbReference type="GO" id="GO:0009423">
    <property type="term" value="P:chorismate biosynthetic process"/>
    <property type="evidence" value="ECO:0007669"/>
    <property type="project" value="UniProtKB-UniRule"/>
</dbReference>
<dbReference type="CDD" id="cd08195">
    <property type="entry name" value="DHQS"/>
    <property type="match status" value="1"/>
</dbReference>
<dbReference type="FunFam" id="3.40.50.1970:FF:000007">
    <property type="entry name" value="Pentafunctional AROM polypeptide"/>
    <property type="match status" value="1"/>
</dbReference>
<dbReference type="Gene3D" id="3.40.50.1970">
    <property type="match status" value="1"/>
</dbReference>
<dbReference type="Gene3D" id="1.20.1090.10">
    <property type="entry name" value="Dehydroquinate synthase-like - alpha domain"/>
    <property type="match status" value="1"/>
</dbReference>
<dbReference type="HAMAP" id="MF_00110">
    <property type="entry name" value="DHQ_synthase"/>
    <property type="match status" value="1"/>
</dbReference>
<dbReference type="InterPro" id="IPR050071">
    <property type="entry name" value="Dehydroquinate_synthase"/>
</dbReference>
<dbReference type="InterPro" id="IPR016037">
    <property type="entry name" value="DHQ_synth_AroB"/>
</dbReference>
<dbReference type="InterPro" id="IPR030963">
    <property type="entry name" value="DHQ_synth_fam"/>
</dbReference>
<dbReference type="InterPro" id="IPR030960">
    <property type="entry name" value="DHQS/DOIS_N"/>
</dbReference>
<dbReference type="InterPro" id="IPR056179">
    <property type="entry name" value="DHQS_C"/>
</dbReference>
<dbReference type="NCBIfam" id="TIGR01357">
    <property type="entry name" value="aroB"/>
    <property type="match status" value="1"/>
</dbReference>
<dbReference type="PANTHER" id="PTHR43622">
    <property type="entry name" value="3-DEHYDROQUINATE SYNTHASE"/>
    <property type="match status" value="1"/>
</dbReference>
<dbReference type="PANTHER" id="PTHR43622:SF7">
    <property type="entry name" value="3-DEHYDROQUINATE SYNTHASE, CHLOROPLASTIC"/>
    <property type="match status" value="1"/>
</dbReference>
<dbReference type="Pfam" id="PF01761">
    <property type="entry name" value="DHQ_synthase"/>
    <property type="match status" value="1"/>
</dbReference>
<dbReference type="Pfam" id="PF24621">
    <property type="entry name" value="DHQS_C"/>
    <property type="match status" value="1"/>
</dbReference>
<dbReference type="PIRSF" id="PIRSF001455">
    <property type="entry name" value="DHQ_synth"/>
    <property type="match status" value="1"/>
</dbReference>
<dbReference type="SUPFAM" id="SSF56796">
    <property type="entry name" value="Dehydroquinate synthase-like"/>
    <property type="match status" value="1"/>
</dbReference>